<reference key="1">
    <citation type="journal article" date="2011" name="J. Bacteriol.">
        <title>Comparative genomics of 28 Salmonella enterica isolates: evidence for CRISPR-mediated adaptive sublineage evolution.</title>
        <authorList>
            <person name="Fricke W.F."/>
            <person name="Mammel M.K."/>
            <person name="McDermott P.F."/>
            <person name="Tartera C."/>
            <person name="White D.G."/>
            <person name="Leclerc J.E."/>
            <person name="Ravel J."/>
            <person name="Cebula T.A."/>
        </authorList>
    </citation>
    <scope>NUCLEOTIDE SEQUENCE [LARGE SCALE GENOMIC DNA]</scope>
    <source>
        <strain>SL254</strain>
    </source>
</reference>
<dbReference type="EC" id="3.5.3.8" evidence="1"/>
<dbReference type="EMBL" id="CP001113">
    <property type="protein sequence ID" value="ACF63520.1"/>
    <property type="molecule type" value="Genomic_DNA"/>
</dbReference>
<dbReference type="RefSeq" id="WP_000195695.1">
    <property type="nucleotide sequence ID" value="NZ_CCMR01000003.1"/>
</dbReference>
<dbReference type="SMR" id="B4SZJ1"/>
<dbReference type="KEGG" id="see:SNSL254_A0852"/>
<dbReference type="HOGENOM" id="CLU_039478_2_0_6"/>
<dbReference type="UniPathway" id="UPA00379">
    <property type="reaction ID" value="UER00552"/>
</dbReference>
<dbReference type="Proteomes" id="UP000008824">
    <property type="component" value="Chromosome"/>
</dbReference>
<dbReference type="GO" id="GO:0008783">
    <property type="term" value="F:agmatinase activity"/>
    <property type="evidence" value="ECO:0007669"/>
    <property type="project" value="TreeGrafter"/>
</dbReference>
<dbReference type="GO" id="GO:0050415">
    <property type="term" value="F:formimidoylglutamase activity"/>
    <property type="evidence" value="ECO:0007669"/>
    <property type="project" value="UniProtKB-UniRule"/>
</dbReference>
<dbReference type="GO" id="GO:0030145">
    <property type="term" value="F:manganese ion binding"/>
    <property type="evidence" value="ECO:0007669"/>
    <property type="project" value="UniProtKB-UniRule"/>
</dbReference>
<dbReference type="GO" id="GO:0019556">
    <property type="term" value="P:L-histidine catabolic process to glutamate and formamide"/>
    <property type="evidence" value="ECO:0007669"/>
    <property type="project" value="UniProtKB-UniPathway"/>
</dbReference>
<dbReference type="GO" id="GO:0019557">
    <property type="term" value="P:L-histidine catabolic process to glutamate and formate"/>
    <property type="evidence" value="ECO:0007669"/>
    <property type="project" value="UniProtKB-UniPathway"/>
</dbReference>
<dbReference type="GO" id="GO:0033389">
    <property type="term" value="P:putrescine biosynthetic process from arginine, via agmatine"/>
    <property type="evidence" value="ECO:0007669"/>
    <property type="project" value="TreeGrafter"/>
</dbReference>
<dbReference type="CDD" id="cd09988">
    <property type="entry name" value="Formimidoylglutamase"/>
    <property type="match status" value="1"/>
</dbReference>
<dbReference type="FunFam" id="3.40.800.10:FF:000010">
    <property type="entry name" value="Formimidoylglutamase"/>
    <property type="match status" value="1"/>
</dbReference>
<dbReference type="Gene3D" id="3.40.800.10">
    <property type="entry name" value="Ureohydrolase domain"/>
    <property type="match status" value="1"/>
</dbReference>
<dbReference type="HAMAP" id="MF_00737">
    <property type="entry name" value="Formimidoylglutam"/>
    <property type="match status" value="1"/>
</dbReference>
<dbReference type="InterPro" id="IPR005923">
    <property type="entry name" value="HutG"/>
</dbReference>
<dbReference type="InterPro" id="IPR006035">
    <property type="entry name" value="Ureohydrolase"/>
</dbReference>
<dbReference type="InterPro" id="IPR023696">
    <property type="entry name" value="Ureohydrolase_dom_sf"/>
</dbReference>
<dbReference type="NCBIfam" id="TIGR01227">
    <property type="entry name" value="hutG"/>
    <property type="match status" value="1"/>
</dbReference>
<dbReference type="PANTHER" id="PTHR11358">
    <property type="entry name" value="ARGINASE/AGMATINASE"/>
    <property type="match status" value="1"/>
</dbReference>
<dbReference type="PANTHER" id="PTHR11358:SF35">
    <property type="entry name" value="FORMIMIDOYLGLUTAMASE"/>
    <property type="match status" value="1"/>
</dbReference>
<dbReference type="Pfam" id="PF00491">
    <property type="entry name" value="Arginase"/>
    <property type="match status" value="1"/>
</dbReference>
<dbReference type="PIRSF" id="PIRSF036979">
    <property type="entry name" value="Arginase"/>
    <property type="match status" value="1"/>
</dbReference>
<dbReference type="SUPFAM" id="SSF52768">
    <property type="entry name" value="Arginase/deacetylase"/>
    <property type="match status" value="1"/>
</dbReference>
<dbReference type="PROSITE" id="PS51409">
    <property type="entry name" value="ARGINASE_2"/>
    <property type="match status" value="1"/>
</dbReference>
<gene>
    <name evidence="1" type="primary">hutG</name>
    <name type="ordered locus">SNSL254_A0852</name>
</gene>
<organism>
    <name type="scientific">Salmonella newport (strain SL254)</name>
    <dbReference type="NCBI Taxonomy" id="423368"/>
    <lineage>
        <taxon>Bacteria</taxon>
        <taxon>Pseudomonadati</taxon>
        <taxon>Pseudomonadota</taxon>
        <taxon>Gammaproteobacteria</taxon>
        <taxon>Enterobacterales</taxon>
        <taxon>Enterobacteriaceae</taxon>
        <taxon>Salmonella</taxon>
    </lineage>
</organism>
<sequence>MTQWYPASPALWQGRDDSIEAPDARRLFQTVTRSETFSPENWQQKIALMGFACDEGVKRNAGRPGAAGGPDALRKALANMASHQGHERLVDLGNWVAPTPDLEGAQQALRNAVSRCLRAGMRTLVLGGGHETAFGHGAGVLDAFAQESVGIINLDAHLDLRQTDRATSGTPFRQLAQLCDAQSRAFHYACFGVSRAANTQALWREAQWRNVTVVEDLDCHDALAQMTQFIDKVDKIYLTIDLDVLPVWEMPAVSAPAALGVPLIQVLRLIEPVCRSGKLQAADLVEFNPRFDEDGAAARVAARLGWQIAHWWR</sequence>
<proteinExistence type="inferred from homology"/>
<feature type="chain" id="PRO_1000133010" description="Formimidoylglutamase">
    <location>
        <begin position="1"/>
        <end position="313"/>
    </location>
</feature>
<feature type="binding site" evidence="1">
    <location>
        <position position="130"/>
    </location>
    <ligand>
        <name>Mn(2+)</name>
        <dbReference type="ChEBI" id="CHEBI:29035"/>
        <label>1</label>
    </ligand>
</feature>
<feature type="binding site" evidence="1">
    <location>
        <position position="155"/>
    </location>
    <ligand>
        <name>Mn(2+)</name>
        <dbReference type="ChEBI" id="CHEBI:29035"/>
        <label>1</label>
    </ligand>
</feature>
<feature type="binding site" evidence="1">
    <location>
        <position position="155"/>
    </location>
    <ligand>
        <name>Mn(2+)</name>
        <dbReference type="ChEBI" id="CHEBI:29035"/>
        <label>2</label>
    </ligand>
</feature>
<feature type="binding site" evidence="1">
    <location>
        <position position="157"/>
    </location>
    <ligand>
        <name>Mn(2+)</name>
        <dbReference type="ChEBI" id="CHEBI:29035"/>
        <label>2</label>
    </ligand>
</feature>
<feature type="binding site" evidence="1">
    <location>
        <position position="159"/>
    </location>
    <ligand>
        <name>Mn(2+)</name>
        <dbReference type="ChEBI" id="CHEBI:29035"/>
        <label>1</label>
    </ligand>
</feature>
<feature type="binding site" evidence="1">
    <location>
        <position position="241"/>
    </location>
    <ligand>
        <name>Mn(2+)</name>
        <dbReference type="ChEBI" id="CHEBI:29035"/>
        <label>1</label>
    </ligand>
</feature>
<feature type="binding site" evidence="1">
    <location>
        <position position="241"/>
    </location>
    <ligand>
        <name>Mn(2+)</name>
        <dbReference type="ChEBI" id="CHEBI:29035"/>
        <label>2</label>
    </ligand>
</feature>
<feature type="binding site" evidence="1">
    <location>
        <position position="243"/>
    </location>
    <ligand>
        <name>Mn(2+)</name>
        <dbReference type="ChEBI" id="CHEBI:29035"/>
        <label>2</label>
    </ligand>
</feature>
<keyword id="KW-0369">Histidine metabolism</keyword>
<keyword id="KW-0378">Hydrolase</keyword>
<keyword id="KW-0464">Manganese</keyword>
<keyword id="KW-0479">Metal-binding</keyword>
<name>HUTG_SALNS</name>
<accession>B4SZJ1</accession>
<comment type="function">
    <text evidence="1">Catalyzes the conversion of N-formimidoyl-L-glutamate to L-glutamate and formamide.</text>
</comment>
<comment type="catalytic activity">
    <reaction evidence="1">
        <text>N-formimidoyl-L-glutamate + H2O = formamide + L-glutamate</text>
        <dbReference type="Rhea" id="RHEA:22492"/>
        <dbReference type="ChEBI" id="CHEBI:15377"/>
        <dbReference type="ChEBI" id="CHEBI:16397"/>
        <dbReference type="ChEBI" id="CHEBI:29985"/>
        <dbReference type="ChEBI" id="CHEBI:58928"/>
        <dbReference type="EC" id="3.5.3.8"/>
    </reaction>
</comment>
<comment type="cofactor">
    <cofactor evidence="1">
        <name>Mn(2+)</name>
        <dbReference type="ChEBI" id="CHEBI:29035"/>
    </cofactor>
    <text evidence="1">Binds 2 manganese ions per subunit.</text>
</comment>
<comment type="pathway">
    <text evidence="1">Amino-acid degradation; L-histidine degradation into L-glutamate; L-glutamate from N-formimidoyl-L-glutamate (hydrolase route): step 1/1.</text>
</comment>
<comment type="similarity">
    <text evidence="1">Belongs to the arginase family.</text>
</comment>
<evidence type="ECO:0000255" key="1">
    <source>
        <dbReference type="HAMAP-Rule" id="MF_00737"/>
    </source>
</evidence>
<protein>
    <recommendedName>
        <fullName evidence="1">Formimidoylglutamase</fullName>
        <ecNumber evidence="1">3.5.3.8</ecNumber>
    </recommendedName>
    <alternativeName>
        <fullName evidence="1">Formiminoglutamase</fullName>
    </alternativeName>
    <alternativeName>
        <fullName evidence="1">Formiminoglutamate hydrolase</fullName>
    </alternativeName>
</protein>